<feature type="chain" id="PRO_1000100444" description="Histidine ammonia-lyase">
    <location>
        <begin position="1"/>
        <end position="511"/>
    </location>
</feature>
<feature type="modified residue" description="2,3-didehydroalanine (Ser)" evidence="1">
    <location>
        <position position="143"/>
    </location>
</feature>
<feature type="cross-link" description="5-imidazolinone (Ala-Gly)" evidence="1">
    <location>
        <begin position="142"/>
        <end position="144"/>
    </location>
</feature>
<keyword id="KW-0963">Cytoplasm</keyword>
<keyword id="KW-0369">Histidine metabolism</keyword>
<keyword id="KW-0456">Lyase</keyword>
<keyword id="KW-1185">Reference proteome</keyword>
<dbReference type="EC" id="4.3.1.3" evidence="1"/>
<dbReference type="EMBL" id="CP000747">
    <property type="protein sequence ID" value="ACG76880.1"/>
    <property type="molecule type" value="Genomic_DNA"/>
</dbReference>
<dbReference type="SMR" id="B4RED8"/>
<dbReference type="STRING" id="450851.PHZ_c0466"/>
<dbReference type="KEGG" id="pzu:PHZ_c0466"/>
<dbReference type="eggNOG" id="COG2986">
    <property type="taxonomic scope" value="Bacteria"/>
</dbReference>
<dbReference type="HOGENOM" id="CLU_014801_4_0_5"/>
<dbReference type="UniPathway" id="UPA00379">
    <property type="reaction ID" value="UER00549"/>
</dbReference>
<dbReference type="Proteomes" id="UP000001868">
    <property type="component" value="Chromosome"/>
</dbReference>
<dbReference type="GO" id="GO:0005737">
    <property type="term" value="C:cytoplasm"/>
    <property type="evidence" value="ECO:0007669"/>
    <property type="project" value="UniProtKB-SubCell"/>
</dbReference>
<dbReference type="GO" id="GO:0004397">
    <property type="term" value="F:histidine ammonia-lyase activity"/>
    <property type="evidence" value="ECO:0007669"/>
    <property type="project" value="UniProtKB-UniRule"/>
</dbReference>
<dbReference type="GO" id="GO:0019556">
    <property type="term" value="P:L-histidine catabolic process to glutamate and formamide"/>
    <property type="evidence" value="ECO:0007669"/>
    <property type="project" value="UniProtKB-UniPathway"/>
</dbReference>
<dbReference type="GO" id="GO:0019557">
    <property type="term" value="P:L-histidine catabolic process to glutamate and formate"/>
    <property type="evidence" value="ECO:0007669"/>
    <property type="project" value="UniProtKB-UniPathway"/>
</dbReference>
<dbReference type="CDD" id="cd00332">
    <property type="entry name" value="PAL-HAL"/>
    <property type="match status" value="1"/>
</dbReference>
<dbReference type="FunFam" id="1.10.275.10:FF:000005">
    <property type="entry name" value="Histidine ammonia-lyase"/>
    <property type="match status" value="1"/>
</dbReference>
<dbReference type="FunFam" id="1.20.200.10:FF:000003">
    <property type="entry name" value="Histidine ammonia-lyase"/>
    <property type="match status" value="1"/>
</dbReference>
<dbReference type="Gene3D" id="1.20.200.10">
    <property type="entry name" value="Fumarase/aspartase (Central domain)"/>
    <property type="match status" value="1"/>
</dbReference>
<dbReference type="Gene3D" id="1.10.275.10">
    <property type="entry name" value="Fumarase/aspartase (N-terminal domain)"/>
    <property type="match status" value="1"/>
</dbReference>
<dbReference type="HAMAP" id="MF_00229">
    <property type="entry name" value="His_ammonia_lyase"/>
    <property type="match status" value="1"/>
</dbReference>
<dbReference type="InterPro" id="IPR001106">
    <property type="entry name" value="Aromatic_Lyase"/>
</dbReference>
<dbReference type="InterPro" id="IPR024083">
    <property type="entry name" value="Fumarase/histidase_N"/>
</dbReference>
<dbReference type="InterPro" id="IPR005921">
    <property type="entry name" value="HutH"/>
</dbReference>
<dbReference type="InterPro" id="IPR008948">
    <property type="entry name" value="L-Aspartase-like"/>
</dbReference>
<dbReference type="InterPro" id="IPR022313">
    <property type="entry name" value="Phe/His_NH3-lyase_AS"/>
</dbReference>
<dbReference type="NCBIfam" id="TIGR01225">
    <property type="entry name" value="hutH"/>
    <property type="match status" value="1"/>
</dbReference>
<dbReference type="NCBIfam" id="NF006871">
    <property type="entry name" value="PRK09367.1"/>
    <property type="match status" value="1"/>
</dbReference>
<dbReference type="PANTHER" id="PTHR10362">
    <property type="entry name" value="HISTIDINE AMMONIA-LYASE"/>
    <property type="match status" value="1"/>
</dbReference>
<dbReference type="Pfam" id="PF00221">
    <property type="entry name" value="Lyase_aromatic"/>
    <property type="match status" value="1"/>
</dbReference>
<dbReference type="SUPFAM" id="SSF48557">
    <property type="entry name" value="L-aspartase-like"/>
    <property type="match status" value="1"/>
</dbReference>
<dbReference type="PROSITE" id="PS00488">
    <property type="entry name" value="PAL_HISTIDASE"/>
    <property type="match status" value="1"/>
</dbReference>
<evidence type="ECO:0000255" key="1">
    <source>
        <dbReference type="HAMAP-Rule" id="MF_00229"/>
    </source>
</evidence>
<accession>B4RED8</accession>
<proteinExistence type="inferred from homology"/>
<organism>
    <name type="scientific">Phenylobacterium zucineum (strain HLK1)</name>
    <dbReference type="NCBI Taxonomy" id="450851"/>
    <lineage>
        <taxon>Bacteria</taxon>
        <taxon>Pseudomonadati</taxon>
        <taxon>Pseudomonadota</taxon>
        <taxon>Alphaproteobacteria</taxon>
        <taxon>Caulobacterales</taxon>
        <taxon>Caulobacteraceae</taxon>
        <taxon>Phenylobacterium</taxon>
    </lineage>
</organism>
<gene>
    <name evidence="1" type="primary">hutH</name>
    <name type="ordered locus">PHZ_c0466</name>
</gene>
<name>HUTH_PHEZH</name>
<reference key="1">
    <citation type="journal article" date="2008" name="BMC Genomics">
        <title>Complete genome of Phenylobacterium zucineum - a novel facultative intracellular bacterium isolated from human erythroleukemia cell line K562.</title>
        <authorList>
            <person name="Luo Y."/>
            <person name="Xu X."/>
            <person name="Ding Z."/>
            <person name="Liu Z."/>
            <person name="Zhang B."/>
            <person name="Yan Z."/>
            <person name="Sun J."/>
            <person name="Hu S."/>
            <person name="Hu X."/>
        </authorList>
    </citation>
    <scope>NUCLEOTIDE SEQUENCE [LARGE SCALE GENOMIC DNA]</scope>
    <source>
        <strain>HLK1</strain>
    </source>
</reference>
<sequence length="511" mass="52941">MTDIVLEPGAAPLSVWREIWRGAGVRLDPAAHAVVAQSAEAVTRILARGEPVYGINTGFGKLATVRIEDADLATLQRNLVLSHAAGVGEASPRAVVRLMMALKLASLAQGASGVRPVTVQLLERMIAQDLIPVVPGQGSVGASGDLAPLAHMAAAMLGVGEIETAGQRLPAGEALAAAGLAPLALGPKEGLALLNGTQFSTANALAGLFEAERLFRSALVTGALSTEAAKGSDTPFDARIHALRRQPGQVEAARALRELMAGSAIRASHLKDDERVQDPYCLRCQPQVMGAALDVLRQAAATLGFEANGVSDNPLIFAGDTNNGEDEALSGGNFHAEPVAFAADMIALAVCEIGSIAERRIAMLVDPALSGLPAFLTPKPGLNSGFMIPQVTAAALVSENKQLAHPASVDSIPTSANQEDHVSMAAHGARRLLAMTANLEGVVAIELLAAAQGCDFHAPLTSSEALERVRARLRRDVPSLDHDRHFAPDIAAAQAIVRAGELAFPDLPGVA</sequence>
<protein>
    <recommendedName>
        <fullName evidence="1">Histidine ammonia-lyase</fullName>
        <shortName evidence="1">Histidase</shortName>
        <ecNumber evidence="1">4.3.1.3</ecNumber>
    </recommendedName>
</protein>
<comment type="catalytic activity">
    <reaction evidence="1">
        <text>L-histidine = trans-urocanate + NH4(+)</text>
        <dbReference type="Rhea" id="RHEA:21232"/>
        <dbReference type="ChEBI" id="CHEBI:17771"/>
        <dbReference type="ChEBI" id="CHEBI:28938"/>
        <dbReference type="ChEBI" id="CHEBI:57595"/>
        <dbReference type="EC" id="4.3.1.3"/>
    </reaction>
</comment>
<comment type="pathway">
    <text evidence="1">Amino-acid degradation; L-histidine degradation into L-glutamate; N-formimidoyl-L-glutamate from L-histidine: step 1/3.</text>
</comment>
<comment type="subcellular location">
    <subcellularLocation>
        <location evidence="1">Cytoplasm</location>
    </subcellularLocation>
</comment>
<comment type="PTM">
    <text evidence="1">Contains an active site 4-methylidene-imidazol-5-one (MIO), which is formed autocatalytically by cyclization and dehydration of residues Ala-Ser-Gly.</text>
</comment>
<comment type="similarity">
    <text evidence="1">Belongs to the PAL/histidase family.</text>
</comment>